<organism>
    <name type="scientific">Acinetobacter baumannii (strain AB0057)</name>
    <dbReference type="NCBI Taxonomy" id="480119"/>
    <lineage>
        <taxon>Bacteria</taxon>
        <taxon>Pseudomonadati</taxon>
        <taxon>Pseudomonadota</taxon>
        <taxon>Gammaproteobacteria</taxon>
        <taxon>Moraxellales</taxon>
        <taxon>Moraxellaceae</taxon>
        <taxon>Acinetobacter</taxon>
        <taxon>Acinetobacter calcoaceticus/baumannii complex</taxon>
    </lineage>
</organism>
<proteinExistence type="inferred from homology"/>
<feature type="chain" id="PRO_1000121937" description="Chromosomal replication initiator protein DnaA">
    <location>
        <begin position="1"/>
        <end position="465"/>
    </location>
</feature>
<feature type="region of interest" description="Domain I, interacts with DnaA modulators" evidence="1">
    <location>
        <begin position="1"/>
        <end position="87"/>
    </location>
</feature>
<feature type="region of interest" description="Disordered" evidence="2">
    <location>
        <begin position="81"/>
        <end position="123"/>
    </location>
</feature>
<feature type="region of interest" description="Domain II" evidence="1">
    <location>
        <begin position="88"/>
        <end position="127"/>
    </location>
</feature>
<feature type="region of interest" description="Domain III, AAA+ region" evidence="1">
    <location>
        <begin position="128"/>
        <end position="345"/>
    </location>
</feature>
<feature type="region of interest" description="Domain IV, binds dsDNA" evidence="1">
    <location>
        <begin position="346"/>
        <end position="465"/>
    </location>
</feature>
<feature type="compositionally biased region" description="Low complexity" evidence="2">
    <location>
        <begin position="88"/>
        <end position="100"/>
    </location>
</feature>
<feature type="binding site" evidence="1">
    <location>
        <position position="173"/>
    </location>
    <ligand>
        <name>ATP</name>
        <dbReference type="ChEBI" id="CHEBI:30616"/>
    </ligand>
</feature>
<feature type="binding site" evidence="1">
    <location>
        <position position="175"/>
    </location>
    <ligand>
        <name>ATP</name>
        <dbReference type="ChEBI" id="CHEBI:30616"/>
    </ligand>
</feature>
<feature type="binding site" evidence="1">
    <location>
        <position position="176"/>
    </location>
    <ligand>
        <name>ATP</name>
        <dbReference type="ChEBI" id="CHEBI:30616"/>
    </ligand>
</feature>
<feature type="binding site" evidence="1">
    <location>
        <position position="177"/>
    </location>
    <ligand>
        <name>ATP</name>
        <dbReference type="ChEBI" id="CHEBI:30616"/>
    </ligand>
</feature>
<protein>
    <recommendedName>
        <fullName evidence="1">Chromosomal replication initiator protein DnaA</fullName>
    </recommendedName>
</protein>
<gene>
    <name evidence="1" type="primary">dnaA</name>
    <name type="ordered locus">AB57_0020</name>
</gene>
<name>DNAA_ACIB5</name>
<reference key="1">
    <citation type="journal article" date="2008" name="J. Bacteriol.">
        <title>Comparative genome sequence analysis of multidrug-resistant Acinetobacter baumannii.</title>
        <authorList>
            <person name="Adams M.D."/>
            <person name="Goglin K."/>
            <person name="Molyneaux N."/>
            <person name="Hujer K.M."/>
            <person name="Lavender H."/>
            <person name="Jamison J.J."/>
            <person name="MacDonald I.J."/>
            <person name="Martin K.M."/>
            <person name="Russo T."/>
            <person name="Campagnari A.A."/>
            <person name="Hujer A.M."/>
            <person name="Bonomo R.A."/>
            <person name="Gill S.R."/>
        </authorList>
    </citation>
    <scope>NUCLEOTIDE SEQUENCE [LARGE SCALE GENOMIC DNA]</scope>
    <source>
        <strain>AB0057</strain>
    </source>
</reference>
<comment type="function">
    <text evidence="1">Plays an essential role in the initiation and regulation of chromosomal replication. ATP-DnaA binds to the origin of replication (oriC) to initiate formation of the DNA replication initiation complex once per cell cycle. Binds the DnaA box (a 9 base pair repeat at the origin) and separates the double-stranded (ds)DNA. Forms a right-handed helical filament on oriC DNA; dsDNA binds to the exterior of the filament while single-stranded (ss)DNA is stabiized in the filament's interior. The ATP-DnaA-oriC complex binds and stabilizes one strand of the AT-rich DNA unwinding element (DUE), permitting loading of DNA polymerase. After initiation quickly degrades to an ADP-DnaA complex that is not apt for DNA replication. Binds acidic phospholipids.</text>
</comment>
<comment type="subunit">
    <text evidence="1">Oligomerizes as a right-handed, spiral filament on DNA at oriC.</text>
</comment>
<comment type="subcellular location">
    <subcellularLocation>
        <location evidence="1">Cytoplasm</location>
    </subcellularLocation>
</comment>
<comment type="domain">
    <text evidence="1">Domain I is involved in oligomerization and binding regulators, domain II is flexibile and of varying length in different bacteria, domain III forms the AAA+ region, while domain IV binds dsDNA.</text>
</comment>
<comment type="similarity">
    <text evidence="1">Belongs to the DnaA family.</text>
</comment>
<accession>B7IBH7</accession>
<dbReference type="EMBL" id="CP001182">
    <property type="protein sequence ID" value="ACJ39452.1"/>
    <property type="molecule type" value="Genomic_DNA"/>
</dbReference>
<dbReference type="RefSeq" id="WP_000964768.1">
    <property type="nucleotide sequence ID" value="NC_011586.2"/>
</dbReference>
<dbReference type="SMR" id="B7IBH7"/>
<dbReference type="GeneID" id="92891940"/>
<dbReference type="KEGG" id="abn:AB57_0020"/>
<dbReference type="HOGENOM" id="CLU_026910_0_1_6"/>
<dbReference type="Proteomes" id="UP000007094">
    <property type="component" value="Chromosome"/>
</dbReference>
<dbReference type="GO" id="GO:0005737">
    <property type="term" value="C:cytoplasm"/>
    <property type="evidence" value="ECO:0007669"/>
    <property type="project" value="UniProtKB-SubCell"/>
</dbReference>
<dbReference type="GO" id="GO:0005886">
    <property type="term" value="C:plasma membrane"/>
    <property type="evidence" value="ECO:0007669"/>
    <property type="project" value="TreeGrafter"/>
</dbReference>
<dbReference type="GO" id="GO:0005524">
    <property type="term" value="F:ATP binding"/>
    <property type="evidence" value="ECO:0007669"/>
    <property type="project" value="UniProtKB-UniRule"/>
</dbReference>
<dbReference type="GO" id="GO:0016887">
    <property type="term" value="F:ATP hydrolysis activity"/>
    <property type="evidence" value="ECO:0007669"/>
    <property type="project" value="InterPro"/>
</dbReference>
<dbReference type="GO" id="GO:0003688">
    <property type="term" value="F:DNA replication origin binding"/>
    <property type="evidence" value="ECO:0007669"/>
    <property type="project" value="UniProtKB-UniRule"/>
</dbReference>
<dbReference type="GO" id="GO:0008289">
    <property type="term" value="F:lipid binding"/>
    <property type="evidence" value="ECO:0007669"/>
    <property type="project" value="UniProtKB-KW"/>
</dbReference>
<dbReference type="GO" id="GO:0006270">
    <property type="term" value="P:DNA replication initiation"/>
    <property type="evidence" value="ECO:0007669"/>
    <property type="project" value="UniProtKB-UniRule"/>
</dbReference>
<dbReference type="GO" id="GO:0006275">
    <property type="term" value="P:regulation of DNA replication"/>
    <property type="evidence" value="ECO:0007669"/>
    <property type="project" value="UniProtKB-UniRule"/>
</dbReference>
<dbReference type="CDD" id="cd00009">
    <property type="entry name" value="AAA"/>
    <property type="match status" value="1"/>
</dbReference>
<dbReference type="CDD" id="cd06571">
    <property type="entry name" value="Bac_DnaA_C"/>
    <property type="match status" value="1"/>
</dbReference>
<dbReference type="FunFam" id="1.10.8.60:FF:000003">
    <property type="entry name" value="Chromosomal replication initiator protein DnaA"/>
    <property type="match status" value="1"/>
</dbReference>
<dbReference type="FunFam" id="3.40.50.300:FF:000668">
    <property type="entry name" value="Chromosomal replication initiator protein DnaA"/>
    <property type="match status" value="1"/>
</dbReference>
<dbReference type="Gene3D" id="1.10.1750.10">
    <property type="match status" value="1"/>
</dbReference>
<dbReference type="Gene3D" id="1.10.8.60">
    <property type="match status" value="1"/>
</dbReference>
<dbReference type="Gene3D" id="3.30.300.180">
    <property type="match status" value="1"/>
</dbReference>
<dbReference type="Gene3D" id="3.40.50.300">
    <property type="entry name" value="P-loop containing nucleotide triphosphate hydrolases"/>
    <property type="match status" value="1"/>
</dbReference>
<dbReference type="HAMAP" id="MF_00377">
    <property type="entry name" value="DnaA_bact"/>
    <property type="match status" value="1"/>
</dbReference>
<dbReference type="InterPro" id="IPR003593">
    <property type="entry name" value="AAA+_ATPase"/>
</dbReference>
<dbReference type="InterPro" id="IPR001957">
    <property type="entry name" value="Chromosome_initiator_DnaA"/>
</dbReference>
<dbReference type="InterPro" id="IPR020591">
    <property type="entry name" value="Chromosome_initiator_DnaA-like"/>
</dbReference>
<dbReference type="InterPro" id="IPR018312">
    <property type="entry name" value="Chromosome_initiator_DnaA_CS"/>
</dbReference>
<dbReference type="InterPro" id="IPR013159">
    <property type="entry name" value="DnaA_C"/>
</dbReference>
<dbReference type="InterPro" id="IPR013317">
    <property type="entry name" value="DnaA_dom"/>
</dbReference>
<dbReference type="InterPro" id="IPR024633">
    <property type="entry name" value="DnaA_N_dom"/>
</dbReference>
<dbReference type="InterPro" id="IPR038454">
    <property type="entry name" value="DnaA_N_sf"/>
</dbReference>
<dbReference type="InterPro" id="IPR027417">
    <property type="entry name" value="P-loop_NTPase"/>
</dbReference>
<dbReference type="InterPro" id="IPR010921">
    <property type="entry name" value="Trp_repressor/repl_initiator"/>
</dbReference>
<dbReference type="NCBIfam" id="TIGR00362">
    <property type="entry name" value="DnaA"/>
    <property type="match status" value="1"/>
</dbReference>
<dbReference type="PANTHER" id="PTHR30050">
    <property type="entry name" value="CHROMOSOMAL REPLICATION INITIATOR PROTEIN DNAA"/>
    <property type="match status" value="1"/>
</dbReference>
<dbReference type="PANTHER" id="PTHR30050:SF2">
    <property type="entry name" value="CHROMOSOMAL REPLICATION INITIATOR PROTEIN DNAA"/>
    <property type="match status" value="1"/>
</dbReference>
<dbReference type="Pfam" id="PF00308">
    <property type="entry name" value="Bac_DnaA"/>
    <property type="match status" value="1"/>
</dbReference>
<dbReference type="Pfam" id="PF08299">
    <property type="entry name" value="Bac_DnaA_C"/>
    <property type="match status" value="1"/>
</dbReference>
<dbReference type="Pfam" id="PF11638">
    <property type="entry name" value="DnaA_N"/>
    <property type="match status" value="1"/>
</dbReference>
<dbReference type="PRINTS" id="PR00051">
    <property type="entry name" value="DNAA"/>
</dbReference>
<dbReference type="SMART" id="SM00382">
    <property type="entry name" value="AAA"/>
    <property type="match status" value="1"/>
</dbReference>
<dbReference type="SMART" id="SM00760">
    <property type="entry name" value="Bac_DnaA_C"/>
    <property type="match status" value="1"/>
</dbReference>
<dbReference type="SUPFAM" id="SSF52540">
    <property type="entry name" value="P-loop containing nucleoside triphosphate hydrolases"/>
    <property type="match status" value="1"/>
</dbReference>
<dbReference type="SUPFAM" id="SSF48295">
    <property type="entry name" value="TrpR-like"/>
    <property type="match status" value="1"/>
</dbReference>
<dbReference type="PROSITE" id="PS01008">
    <property type="entry name" value="DNAA"/>
    <property type="match status" value="1"/>
</dbReference>
<evidence type="ECO:0000255" key="1">
    <source>
        <dbReference type="HAMAP-Rule" id="MF_00377"/>
    </source>
</evidence>
<evidence type="ECO:0000256" key="2">
    <source>
        <dbReference type="SAM" id="MobiDB-lite"/>
    </source>
</evidence>
<sequence length="465" mass="52263">MLWTDCLTRLRQELSDNVFAMWIRPLVAEEVEGILRLYAPNPYWTRYIQENHLELISILAEQLSEGRVRQVEILVDSRPGSILSSSEQPATTTAALQTAPIPQPAKVKREPEPVANTAVSSKSSKKKLLNPQFTFSLFVEGRSNQMAAETCRKVLTQLGASQHNPLFLYGPTGLGKTHLMQAVGNALLQAKPNARVMYMTSESFVQDFVSSLQKGKVEEFKKNCRSLDLLLVDDIHLLAGKEASLVEFFYTFNALLDESKQIILTSDRYPKELTELDPRLVSRFSWGLSVGVEPPDIETRIEILLKKAENSGVDLPRNCALFIAQQVVANVRELEGALNKVVAISRFKGAPIDLDVVRESLKDVLAIRARTISVENIQRVVSEYFRIPLKELVGPKRTRIYARPRQLAMGLARELTGDSFPEIGMAFGGRDHSTVMHACEKVVSLREEDPIFDEDYKNLLRLLQS</sequence>
<keyword id="KW-0067">ATP-binding</keyword>
<keyword id="KW-0963">Cytoplasm</keyword>
<keyword id="KW-0235">DNA replication</keyword>
<keyword id="KW-0238">DNA-binding</keyword>
<keyword id="KW-0446">Lipid-binding</keyword>
<keyword id="KW-0547">Nucleotide-binding</keyword>